<name>KGUA_RHOP2</name>
<organism>
    <name type="scientific">Rhodopseudomonas palustris (strain HaA2)</name>
    <dbReference type="NCBI Taxonomy" id="316058"/>
    <lineage>
        <taxon>Bacteria</taxon>
        <taxon>Pseudomonadati</taxon>
        <taxon>Pseudomonadota</taxon>
        <taxon>Alphaproteobacteria</taxon>
        <taxon>Hyphomicrobiales</taxon>
        <taxon>Nitrobacteraceae</taxon>
        <taxon>Rhodopseudomonas</taxon>
    </lineage>
</organism>
<comment type="function">
    <text evidence="1">Essential for recycling GMP and indirectly, cGMP.</text>
</comment>
<comment type="catalytic activity">
    <reaction evidence="1">
        <text>GMP + ATP = GDP + ADP</text>
        <dbReference type="Rhea" id="RHEA:20780"/>
        <dbReference type="ChEBI" id="CHEBI:30616"/>
        <dbReference type="ChEBI" id="CHEBI:58115"/>
        <dbReference type="ChEBI" id="CHEBI:58189"/>
        <dbReference type="ChEBI" id="CHEBI:456216"/>
        <dbReference type="EC" id="2.7.4.8"/>
    </reaction>
</comment>
<comment type="subcellular location">
    <subcellularLocation>
        <location evidence="1">Cytoplasm</location>
    </subcellularLocation>
</comment>
<comment type="similarity">
    <text evidence="1">Belongs to the guanylate kinase family.</text>
</comment>
<protein>
    <recommendedName>
        <fullName evidence="1">Guanylate kinase</fullName>
        <ecNumber evidence="1">2.7.4.8</ecNumber>
    </recommendedName>
    <alternativeName>
        <fullName evidence="1">GMP kinase</fullName>
    </alternativeName>
</protein>
<sequence length="220" mass="24616">MKDGAAGSLNGIERRGLMFVLSSPSGAGKTTLSRMLVDEAPGLRMSVSATTRPKRPGEVDGRDYYFVDRPKFDAMVEAGEFLEWANVFDNCYGTPRAPVEAALSAGNDVLFDIDWQGTQQLRSRASNDVVSVFILPPSVQDLEHRLHTRAQDSDEVIRGRMKKAGDEMSHFDAYDYIVVNDNIGVAFESVKAILRAEQLKRERQIGIDAFVREMRRELEK</sequence>
<keyword id="KW-0067">ATP-binding</keyword>
<keyword id="KW-0963">Cytoplasm</keyword>
<keyword id="KW-0418">Kinase</keyword>
<keyword id="KW-0547">Nucleotide-binding</keyword>
<keyword id="KW-1185">Reference proteome</keyword>
<keyword id="KW-0808">Transferase</keyword>
<dbReference type="EC" id="2.7.4.8" evidence="1"/>
<dbReference type="EMBL" id="CP000250">
    <property type="protein sequence ID" value="ABD07177.1"/>
    <property type="molecule type" value="Genomic_DNA"/>
</dbReference>
<dbReference type="RefSeq" id="WP_011441362.1">
    <property type="nucleotide sequence ID" value="NC_007778.1"/>
</dbReference>
<dbReference type="SMR" id="Q2IX83"/>
<dbReference type="STRING" id="316058.RPB_2472"/>
<dbReference type="KEGG" id="rpb:RPB_2472"/>
<dbReference type="eggNOG" id="COG0194">
    <property type="taxonomic scope" value="Bacteria"/>
</dbReference>
<dbReference type="HOGENOM" id="CLU_001715_1_0_5"/>
<dbReference type="OrthoDB" id="9808150at2"/>
<dbReference type="Proteomes" id="UP000008809">
    <property type="component" value="Chromosome"/>
</dbReference>
<dbReference type="GO" id="GO:0005829">
    <property type="term" value="C:cytosol"/>
    <property type="evidence" value="ECO:0007669"/>
    <property type="project" value="TreeGrafter"/>
</dbReference>
<dbReference type="GO" id="GO:0005524">
    <property type="term" value="F:ATP binding"/>
    <property type="evidence" value="ECO:0007669"/>
    <property type="project" value="UniProtKB-UniRule"/>
</dbReference>
<dbReference type="GO" id="GO:0004385">
    <property type="term" value="F:guanylate kinase activity"/>
    <property type="evidence" value="ECO:0007669"/>
    <property type="project" value="UniProtKB-UniRule"/>
</dbReference>
<dbReference type="CDD" id="cd00071">
    <property type="entry name" value="GMPK"/>
    <property type="match status" value="1"/>
</dbReference>
<dbReference type="FunFam" id="3.30.63.10:FF:000002">
    <property type="entry name" value="Guanylate kinase 1"/>
    <property type="match status" value="1"/>
</dbReference>
<dbReference type="Gene3D" id="3.30.63.10">
    <property type="entry name" value="Guanylate Kinase phosphate binding domain"/>
    <property type="match status" value="1"/>
</dbReference>
<dbReference type="Gene3D" id="3.40.50.300">
    <property type="entry name" value="P-loop containing nucleotide triphosphate hydrolases"/>
    <property type="match status" value="1"/>
</dbReference>
<dbReference type="HAMAP" id="MF_00328">
    <property type="entry name" value="Guanylate_kinase"/>
    <property type="match status" value="1"/>
</dbReference>
<dbReference type="InterPro" id="IPR008145">
    <property type="entry name" value="GK/Ca_channel_bsu"/>
</dbReference>
<dbReference type="InterPro" id="IPR008144">
    <property type="entry name" value="Guanylate_kin-like_dom"/>
</dbReference>
<dbReference type="InterPro" id="IPR017665">
    <property type="entry name" value="Guanylate_kinase"/>
</dbReference>
<dbReference type="InterPro" id="IPR020590">
    <property type="entry name" value="Guanylate_kinase_CS"/>
</dbReference>
<dbReference type="InterPro" id="IPR027417">
    <property type="entry name" value="P-loop_NTPase"/>
</dbReference>
<dbReference type="NCBIfam" id="TIGR03263">
    <property type="entry name" value="guanyl_kin"/>
    <property type="match status" value="1"/>
</dbReference>
<dbReference type="PANTHER" id="PTHR23117:SF13">
    <property type="entry name" value="GUANYLATE KINASE"/>
    <property type="match status" value="1"/>
</dbReference>
<dbReference type="PANTHER" id="PTHR23117">
    <property type="entry name" value="GUANYLATE KINASE-RELATED"/>
    <property type="match status" value="1"/>
</dbReference>
<dbReference type="Pfam" id="PF00625">
    <property type="entry name" value="Guanylate_kin"/>
    <property type="match status" value="1"/>
</dbReference>
<dbReference type="SMART" id="SM00072">
    <property type="entry name" value="GuKc"/>
    <property type="match status" value="1"/>
</dbReference>
<dbReference type="SUPFAM" id="SSF52540">
    <property type="entry name" value="P-loop containing nucleoside triphosphate hydrolases"/>
    <property type="match status" value="1"/>
</dbReference>
<dbReference type="PROSITE" id="PS00856">
    <property type="entry name" value="GUANYLATE_KINASE_1"/>
    <property type="match status" value="1"/>
</dbReference>
<dbReference type="PROSITE" id="PS50052">
    <property type="entry name" value="GUANYLATE_KINASE_2"/>
    <property type="match status" value="1"/>
</dbReference>
<accession>Q2IX83</accession>
<feature type="chain" id="PRO_0000266386" description="Guanylate kinase">
    <location>
        <begin position="1"/>
        <end position="220"/>
    </location>
</feature>
<feature type="domain" description="Guanylate kinase-like" evidence="1">
    <location>
        <begin position="16"/>
        <end position="195"/>
    </location>
</feature>
<feature type="binding site" evidence="1">
    <location>
        <begin position="23"/>
        <end position="30"/>
    </location>
    <ligand>
        <name>ATP</name>
        <dbReference type="ChEBI" id="CHEBI:30616"/>
    </ligand>
</feature>
<evidence type="ECO:0000255" key="1">
    <source>
        <dbReference type="HAMAP-Rule" id="MF_00328"/>
    </source>
</evidence>
<gene>
    <name evidence="1" type="primary">gmk</name>
    <name type="ordered locus">RPB_2472</name>
</gene>
<reference key="1">
    <citation type="submission" date="2006-01" db="EMBL/GenBank/DDBJ databases">
        <title>Complete sequence of Rhodopseudomonas palustris HaA2.</title>
        <authorList>
            <consortium name="US DOE Joint Genome Institute"/>
            <person name="Copeland A."/>
            <person name="Lucas S."/>
            <person name="Lapidus A."/>
            <person name="Barry K."/>
            <person name="Detter J.C."/>
            <person name="Glavina T."/>
            <person name="Hammon N."/>
            <person name="Israni S."/>
            <person name="Pitluck S."/>
            <person name="Chain P."/>
            <person name="Malfatti S."/>
            <person name="Shin M."/>
            <person name="Vergez L."/>
            <person name="Schmutz J."/>
            <person name="Larimer F."/>
            <person name="Land M."/>
            <person name="Hauser L."/>
            <person name="Pelletier D.A."/>
            <person name="Kyrpides N."/>
            <person name="Anderson I."/>
            <person name="Oda Y."/>
            <person name="Harwood C.S."/>
            <person name="Richardson P."/>
        </authorList>
    </citation>
    <scope>NUCLEOTIDE SEQUENCE [LARGE SCALE GENOMIC DNA]</scope>
    <source>
        <strain>HaA2</strain>
    </source>
</reference>
<proteinExistence type="inferred from homology"/>